<reference key="1">
    <citation type="journal article" date="2000" name="Mol. Gen. Genet.">
        <title>Complete nucleotide sequence of the Oenothera elata plastid chromosome, representing plastome I of the five distinguishable Euoenothera plastomes.</title>
        <authorList>
            <person name="Hupfer H."/>
            <person name="Swiatek M."/>
            <person name="Hornung S."/>
            <person name="Herrmann R.G."/>
            <person name="Maier R.M."/>
            <person name="Chiu W.-L."/>
            <person name="Sears B."/>
        </authorList>
    </citation>
    <scope>NUCLEOTIDE SEQUENCE [LARGE SCALE GENOMIC DNA]</scope>
    <source>
        <strain>cv. Johansen</strain>
    </source>
</reference>
<accession>P61041</accession>
<accession>P12178</accession>
<accession>P56789</accession>
<sequence>MDIVSLAWAALMVVFTFSLSLVVWGRSGL</sequence>
<geneLocation type="chloroplast"/>
<dbReference type="EMBL" id="AJ271079">
    <property type="protein sequence ID" value="CAB67149.1"/>
    <property type="molecule type" value="Genomic_DNA"/>
</dbReference>
<dbReference type="RefSeq" id="NP_084684.1">
    <property type="nucleotide sequence ID" value="NC_002693.2"/>
</dbReference>
<dbReference type="SMR" id="P61041"/>
<dbReference type="GeneID" id="802744"/>
<dbReference type="GO" id="GO:0009535">
    <property type="term" value="C:chloroplast thylakoid membrane"/>
    <property type="evidence" value="ECO:0007669"/>
    <property type="project" value="UniProtKB-SubCell"/>
</dbReference>
<dbReference type="GO" id="GO:0009512">
    <property type="term" value="C:cytochrome b6f complex"/>
    <property type="evidence" value="ECO:0007669"/>
    <property type="project" value="InterPro"/>
</dbReference>
<dbReference type="GO" id="GO:0045158">
    <property type="term" value="F:electron transporter, transferring electrons within cytochrome b6/f complex of photosystem II activity"/>
    <property type="evidence" value="ECO:0007669"/>
    <property type="project" value="InterPro"/>
</dbReference>
<dbReference type="GO" id="GO:0017004">
    <property type="term" value="P:cytochrome complex assembly"/>
    <property type="evidence" value="ECO:0007669"/>
    <property type="project" value="UniProtKB-UniRule"/>
</dbReference>
<dbReference type="GO" id="GO:0015979">
    <property type="term" value="P:photosynthesis"/>
    <property type="evidence" value="ECO:0007669"/>
    <property type="project" value="UniProtKB-KW"/>
</dbReference>
<dbReference type="HAMAP" id="MF_00395">
    <property type="entry name" value="Cytb6_f_PetN"/>
    <property type="match status" value="1"/>
</dbReference>
<dbReference type="InterPro" id="IPR036143">
    <property type="entry name" value="Cytochr_b6-f_cplx_su8_sf"/>
</dbReference>
<dbReference type="InterPro" id="IPR005497">
    <property type="entry name" value="Cytochrome_b6-f_cplx_su8"/>
</dbReference>
<dbReference type="Pfam" id="PF03742">
    <property type="entry name" value="PetN"/>
    <property type="match status" value="1"/>
</dbReference>
<dbReference type="SUPFAM" id="SSF103451">
    <property type="entry name" value="PetN subunit of the cytochrome b6f complex"/>
    <property type="match status" value="1"/>
</dbReference>
<comment type="function">
    <text evidence="1">Component of the cytochrome b6-f complex, which mediates electron transfer between photosystem II (PSII) and photosystem I (PSI), cyclic electron flow around PSI, and state transitions.</text>
</comment>
<comment type="subunit">
    <text evidence="1">The 4 large subunits of the cytochrome b6-f complex are cytochrome b6, subunit IV (17 kDa polypeptide, PetD), cytochrome f and the Rieske protein, while the 4 small subunits are PetG, PetL, PetM and PetN. The complex functions as a dimer (By similarity).</text>
</comment>
<comment type="subcellular location">
    <subcellularLocation>
        <location evidence="1">Plastid</location>
        <location evidence="1">Chloroplast thylakoid membrane</location>
        <topology evidence="1">Single-pass membrane protein</topology>
    </subcellularLocation>
</comment>
<comment type="similarity">
    <text evidence="3">Belongs to the PetN family.</text>
</comment>
<protein>
    <recommendedName>
        <fullName>Cytochrome b6-f complex subunit 8</fullName>
    </recommendedName>
    <alternativeName>
        <fullName>Cytochrome b6-f complex subunit PetN</fullName>
    </alternativeName>
    <alternativeName>
        <fullName>Cytochrome b6-f complex subunit VIII</fullName>
    </alternativeName>
</protein>
<evidence type="ECO:0000250" key="1"/>
<evidence type="ECO:0000255" key="2"/>
<evidence type="ECO:0000305" key="3"/>
<name>PETN_OENEH</name>
<gene>
    <name type="primary">petN</name>
</gene>
<organism>
    <name type="scientific">Oenothera elata subsp. hookeri</name>
    <name type="common">Hooker's evening primrose</name>
    <name type="synonym">Oenothera hookeri</name>
    <dbReference type="NCBI Taxonomy" id="85636"/>
    <lineage>
        <taxon>Eukaryota</taxon>
        <taxon>Viridiplantae</taxon>
        <taxon>Streptophyta</taxon>
        <taxon>Embryophyta</taxon>
        <taxon>Tracheophyta</taxon>
        <taxon>Spermatophyta</taxon>
        <taxon>Magnoliopsida</taxon>
        <taxon>eudicotyledons</taxon>
        <taxon>Gunneridae</taxon>
        <taxon>Pentapetalae</taxon>
        <taxon>rosids</taxon>
        <taxon>malvids</taxon>
        <taxon>Myrtales</taxon>
        <taxon>Onagraceae</taxon>
        <taxon>Onagroideae</taxon>
        <taxon>Onagreae</taxon>
        <taxon>Oenothera</taxon>
    </lineage>
</organism>
<keyword id="KW-0150">Chloroplast</keyword>
<keyword id="KW-0249">Electron transport</keyword>
<keyword id="KW-0472">Membrane</keyword>
<keyword id="KW-0602">Photosynthesis</keyword>
<keyword id="KW-0934">Plastid</keyword>
<keyword id="KW-0793">Thylakoid</keyword>
<keyword id="KW-0812">Transmembrane</keyword>
<keyword id="KW-1133">Transmembrane helix</keyword>
<keyword id="KW-0813">Transport</keyword>
<feature type="chain" id="PRO_0000217119" description="Cytochrome b6-f complex subunit 8">
    <location>
        <begin position="1"/>
        <end position="29"/>
    </location>
</feature>
<feature type="transmembrane region" description="Helical" evidence="2">
    <location>
        <begin position="3"/>
        <end position="23"/>
    </location>
</feature>
<proteinExistence type="inferred from homology"/>